<comment type="function">
    <text evidence="1 2 3 6">5'-&gt;3' double-stranded DNA exonuclease (By similarity). May be involved in the WalK/WalR signal transduction pathway (By similarity). Required for accurate coordination of cell division with DNA replication (By similarity). May play a role in cell wall metabolism (PubMed:21169496).</text>
</comment>
<comment type="cofactor">
    <cofactor evidence="4">
        <name>Fe(2+)</name>
        <dbReference type="ChEBI" id="CHEBI:29033"/>
    </cofactor>
    <cofactor evidence="4">
        <name>Zn(2+)</name>
        <dbReference type="ChEBI" id="CHEBI:29105"/>
    </cofactor>
    <cofactor evidence="4">
        <name>Mn(2+)</name>
        <dbReference type="ChEBI" id="CHEBI:29035"/>
    </cofactor>
    <text evidence="4">Binds 2 metal ions per subunit. The endogenous metal is unknown.</text>
</comment>
<comment type="subcellular location">
    <subcellularLocation>
        <location evidence="5">Cell membrane</location>
        <topology evidence="8">Peripheral membrane protein</topology>
        <orientation evidence="8">Cytoplasmic side</orientation>
    </subcellularLocation>
    <text evidence="5">In exponentially growing cells mostly associated with the cytoplasmic side of the cell membrane.</text>
</comment>
<comment type="disruption phenotype">
    <text evidence="6">More sensitive to some cephalosporin antibiotics, such as cefoperazone, cefotaxime, cefoxitin, and cefuroxime, but not the penicillin-like antibiotic amdinocillin.</text>
</comment>
<comment type="miscellaneous">
    <text evidence="3">Part of a walR-walK-walJ operon.</text>
</comment>
<comment type="miscellaneous">
    <text evidence="5">Present in about 1200 monomers per cell in cultures growing exponentially.</text>
</comment>
<comment type="similarity">
    <text evidence="8">Belongs to the metallo-beta-lactamase superfamily.</text>
</comment>
<sequence length="269" mass="29917">MSEIGFKYSILASGSSGNSFYLETSKKKLLVDAGLSGKKITSLLAEINRKPEDLDAILITHEHSDHIHGVGVLARKYGMDLYANEKTWQAMENSKYLGKVDSSQKHIFEMGKTKTFGDIDIESFGVSHDAVAPQFYRFMKDDKSFVLLTDTGYVSDRMAGIVENADGYLIEANHDVEILRSGSYAWRLKQRILSDLGHLSNEDGAEAMIRTLGNRTKKIYLGHLSKENNIKELAHMTMVNQLAQADLGVGVDFKVYDTSPDTATPLTEI</sequence>
<proteinExistence type="evidence at protein level"/>
<gene>
    <name evidence="7" type="primary">walJ</name>
    <name evidence="9" type="synonym">vicX</name>
    <name evidence="3" type="synonym">yycJ</name>
    <name evidence="9" type="ordered locus">SPD_1083</name>
</gene>
<reference evidence="10" key="1">
    <citation type="journal article" date="2007" name="J. Bacteriol.">
        <title>Genome sequence of Avery's virulent serotype 2 strain D39 of Streptococcus pneumoniae and comparison with that of unencapsulated laboratory strain R6.</title>
        <authorList>
            <person name="Lanie J.A."/>
            <person name="Ng W.-L."/>
            <person name="Kazmierczak K.M."/>
            <person name="Andrzejewski T.M."/>
            <person name="Davidsen T.M."/>
            <person name="Wayne K.J."/>
            <person name="Tettelin H."/>
            <person name="Glass J.I."/>
            <person name="Winkler M.E."/>
        </authorList>
    </citation>
    <scope>NUCLEOTIDE SEQUENCE [LARGE SCALE GENOMIC DNA]</scope>
    <source>
        <strain evidence="10">D39 / NCTC 7466</strain>
    </source>
</reference>
<reference evidence="8" key="2">
    <citation type="journal article" date="2010" name="J. Bacteriol.">
        <title>Localization and cellular amounts of the WalRKJ (VicRKX) two-component regulatory system proteins in serotype 2 Streptococcus pneumoniae.</title>
        <authorList>
            <person name="Wayne K.J."/>
            <person name="Sham L.T."/>
            <person name="Tsui H.C."/>
            <person name="Gutu A.D."/>
            <person name="Barendt S.M."/>
            <person name="Keen S.K."/>
            <person name="Winkler M.E."/>
        </authorList>
    </citation>
    <scope>SUBCELLULAR LOCATION</scope>
    <scope>LEVEL OF PROTEIN EXPRESSION</scope>
</reference>
<reference evidence="8" key="3">
    <citation type="journal article" date="2011" name="J. Bacteriol.">
        <title>The putative hydrolase YycJ (WalJ) affects the coordination of cell division with DNA replication in Bacillus subtilis and may play a conserved role in cell wall metabolism.</title>
        <authorList>
            <person name="Biller S.J."/>
            <person name="Wayne K.J."/>
            <person name="Winkler M.E."/>
            <person name="Burkholder W.F."/>
        </authorList>
    </citation>
    <scope>FUNCTION</scope>
    <scope>DISRUPTION PHENOTYPE</scope>
</reference>
<feature type="chain" id="PRO_0000459008" description="Exodeoxyribonuclease WalJ">
    <location>
        <begin position="1"/>
        <end position="269"/>
    </location>
</feature>
<feature type="binding site" evidence="4">
    <location>
        <position position="61"/>
    </location>
    <ligand>
        <name>a divalent metal cation</name>
        <dbReference type="ChEBI" id="CHEBI:60240"/>
        <label>1</label>
    </ligand>
</feature>
<feature type="binding site" evidence="4">
    <location>
        <position position="63"/>
    </location>
    <ligand>
        <name>a divalent metal cation</name>
        <dbReference type="ChEBI" id="CHEBI:60240"/>
        <label>1</label>
    </ligand>
</feature>
<feature type="binding site" evidence="4">
    <location>
        <position position="65"/>
    </location>
    <ligand>
        <name>a divalent metal cation</name>
        <dbReference type="ChEBI" id="CHEBI:60240"/>
        <label>2</label>
    </ligand>
</feature>
<feature type="binding site" evidence="4">
    <location>
        <position position="66"/>
    </location>
    <ligand>
        <name>a divalent metal cation</name>
        <dbReference type="ChEBI" id="CHEBI:60240"/>
        <label>2</label>
    </ligand>
</feature>
<feature type="binding site" evidence="4">
    <location>
        <position position="150"/>
    </location>
    <ligand>
        <name>a divalent metal cation</name>
        <dbReference type="ChEBI" id="CHEBI:60240"/>
        <label>2</label>
    </ligand>
</feature>
<protein>
    <recommendedName>
        <fullName evidence="1">Exodeoxyribonuclease WalJ</fullName>
        <ecNumber evidence="1">3.1.11.-</ecNumber>
    </recommendedName>
</protein>
<dbReference type="EC" id="3.1.11.-" evidence="1"/>
<dbReference type="EMBL" id="CP000410">
    <property type="protein sequence ID" value="ABJ55100.1"/>
    <property type="molecule type" value="Genomic_DNA"/>
</dbReference>
<dbReference type="RefSeq" id="WP_001289493.1">
    <property type="nucleotide sequence ID" value="NZ_JAMLJR010000006.1"/>
</dbReference>
<dbReference type="SMR" id="A0A0H2ZQT7"/>
<dbReference type="PaxDb" id="373153-SPD_1083"/>
<dbReference type="KEGG" id="spd:SPD_1083"/>
<dbReference type="eggNOG" id="COG1235">
    <property type="taxonomic scope" value="Bacteria"/>
</dbReference>
<dbReference type="HOGENOM" id="CLU_073253_0_0_9"/>
<dbReference type="BioCyc" id="SPNE373153:G1G6V-1174-MONOMER"/>
<dbReference type="Proteomes" id="UP000001452">
    <property type="component" value="Chromosome"/>
</dbReference>
<dbReference type="GO" id="GO:0005886">
    <property type="term" value="C:plasma membrane"/>
    <property type="evidence" value="ECO:0007669"/>
    <property type="project" value="UniProtKB-SubCell"/>
</dbReference>
<dbReference type="GO" id="GO:0004527">
    <property type="term" value="F:exonuclease activity"/>
    <property type="evidence" value="ECO:0007669"/>
    <property type="project" value="UniProtKB-KW"/>
</dbReference>
<dbReference type="GO" id="GO:0046872">
    <property type="term" value="F:metal ion binding"/>
    <property type="evidence" value="ECO:0007669"/>
    <property type="project" value="UniProtKB-KW"/>
</dbReference>
<dbReference type="CDD" id="cd07733">
    <property type="entry name" value="YycJ-like_MBL-fold"/>
    <property type="match status" value="1"/>
</dbReference>
<dbReference type="Gene3D" id="3.60.15.10">
    <property type="entry name" value="Ribonuclease Z/Hydroxyacylglutathione hydrolase-like"/>
    <property type="match status" value="1"/>
</dbReference>
<dbReference type="InterPro" id="IPR001279">
    <property type="entry name" value="Metallo-B-lactamas"/>
</dbReference>
<dbReference type="InterPro" id="IPR036866">
    <property type="entry name" value="RibonucZ/Hydroxyglut_hydro"/>
</dbReference>
<dbReference type="InterPro" id="IPR052533">
    <property type="entry name" value="WalJ_YycJ_ExoDNase_sf"/>
</dbReference>
<dbReference type="PANTHER" id="PTHR47619:SF1">
    <property type="entry name" value="EXODEOXYRIBONUCLEASE WALJ"/>
    <property type="match status" value="1"/>
</dbReference>
<dbReference type="PANTHER" id="PTHR47619">
    <property type="entry name" value="METALLO-HYDROLASE YYCJ-RELATED"/>
    <property type="match status" value="1"/>
</dbReference>
<dbReference type="Pfam" id="PF12706">
    <property type="entry name" value="Lactamase_B_2"/>
    <property type="match status" value="1"/>
</dbReference>
<dbReference type="SMART" id="SM00849">
    <property type="entry name" value="Lactamase_B"/>
    <property type="match status" value="1"/>
</dbReference>
<dbReference type="SUPFAM" id="SSF56281">
    <property type="entry name" value="Metallo-hydrolase/oxidoreductase"/>
    <property type="match status" value="1"/>
</dbReference>
<evidence type="ECO:0000250" key="1">
    <source>
        <dbReference type="UniProtKB" id="A0A4Y1WBN6"/>
    </source>
</evidence>
<evidence type="ECO:0000250" key="2">
    <source>
        <dbReference type="UniProtKB" id="C0SP91"/>
    </source>
</evidence>
<evidence type="ECO:0000250" key="3">
    <source>
        <dbReference type="UniProtKB" id="Q8DPL9"/>
    </source>
</evidence>
<evidence type="ECO:0000250" key="4">
    <source>
        <dbReference type="UniProtKB" id="Q8ZRM2"/>
    </source>
</evidence>
<evidence type="ECO:0000269" key="5">
    <source>
    </source>
</evidence>
<evidence type="ECO:0000269" key="6">
    <source>
    </source>
</evidence>
<evidence type="ECO:0000303" key="7">
    <source>
    </source>
</evidence>
<evidence type="ECO:0000305" key="8"/>
<evidence type="ECO:0000312" key="9">
    <source>
        <dbReference type="EMBL" id="ABJ55100.1"/>
    </source>
</evidence>
<evidence type="ECO:0000312" key="10">
    <source>
        <dbReference type="Proteomes" id="UP000001452"/>
    </source>
</evidence>
<keyword id="KW-1003">Cell membrane</keyword>
<keyword id="KW-0269">Exonuclease</keyword>
<keyword id="KW-0378">Hydrolase</keyword>
<keyword id="KW-0472">Membrane</keyword>
<keyword id="KW-0479">Metal-binding</keyword>
<keyword id="KW-0540">Nuclease</keyword>
<keyword id="KW-1185">Reference proteome</keyword>
<name>WALJ_STRP2</name>
<organism evidence="10">
    <name type="scientific">Streptococcus pneumoniae serotype 2 (strain D39 / NCTC 7466)</name>
    <dbReference type="NCBI Taxonomy" id="373153"/>
    <lineage>
        <taxon>Bacteria</taxon>
        <taxon>Bacillati</taxon>
        <taxon>Bacillota</taxon>
        <taxon>Bacilli</taxon>
        <taxon>Lactobacillales</taxon>
        <taxon>Streptococcaceae</taxon>
        <taxon>Streptococcus</taxon>
    </lineage>
</organism>
<accession>A0A0H2ZQT7</accession>